<proteinExistence type="evidence at transcript level"/>
<sequence>MAERRVPFTFLTSPSWEPFRDWYHGSRLFDQSFGMPHIPEDWYKWPSGSAWPGYFRLLPSESALLPAPGSPYGRALSELSSGISEIRQSADSWKVTLDVNHFAPEELVVKTKDNIVEITGKHEEKQDEHGFISRCFTRKYTLPPGVEATAVRSSLSPDGMLTVEAPLPKPAIQSSEITIPVTVEAKKEEPAKK</sequence>
<keyword id="KW-0117">Actin capping</keyword>
<keyword id="KW-0143">Chaperone</keyword>
<keyword id="KW-0963">Cytoplasm</keyword>
<keyword id="KW-0206">Cytoskeleton</keyword>
<keyword id="KW-0539">Nucleus</keyword>
<keyword id="KW-0597">Phosphoprotein</keyword>
<keyword id="KW-1185">Reference proteome</keyword>
<keyword id="KW-0346">Stress response</keyword>
<protein>
    <recommendedName>
        <fullName>Heat shock protein beta-1</fullName>
        <shortName>HspB1</shortName>
    </recommendedName>
    <alternativeName>
        <fullName>25 kDa IAP</fullName>
    </alternativeName>
    <alternativeName>
        <fullName>Actin polymerization inhibitor</fullName>
    </alternativeName>
    <alternativeName>
        <fullName>Heat shock 25 kDa protein</fullName>
        <shortName>HSP 25</shortName>
    </alternativeName>
    <alternativeName>
        <fullName>Heat shock 27 kDa protein</fullName>
        <shortName>HSP 27</shortName>
    </alternativeName>
</protein>
<dbReference type="EMBL" id="X59541">
    <property type="protein sequence ID" value="CAA42114.1"/>
    <property type="molecule type" value="mRNA"/>
</dbReference>
<dbReference type="PIR" id="A39644">
    <property type="entry name" value="A39644"/>
</dbReference>
<dbReference type="RefSeq" id="NP_990621.1">
    <property type="nucleotide sequence ID" value="NM_205290.1"/>
</dbReference>
<dbReference type="SMR" id="Q00649"/>
<dbReference type="BioGRID" id="676487">
    <property type="interactions" value="1"/>
</dbReference>
<dbReference type="FunCoup" id="Q00649">
    <property type="interactions" value="1643"/>
</dbReference>
<dbReference type="IntAct" id="Q00649">
    <property type="interactions" value="1"/>
</dbReference>
<dbReference type="STRING" id="9031.ENSGALP00000039447"/>
<dbReference type="iPTMnet" id="Q00649"/>
<dbReference type="PaxDb" id="9031-ENSGALP00000039447"/>
<dbReference type="GeneID" id="396227"/>
<dbReference type="KEGG" id="gga:396227"/>
<dbReference type="CTD" id="3315"/>
<dbReference type="VEuPathDB" id="HostDB:geneid_396227"/>
<dbReference type="eggNOG" id="KOG3591">
    <property type="taxonomic scope" value="Eukaryota"/>
</dbReference>
<dbReference type="InParanoid" id="Q00649"/>
<dbReference type="OrthoDB" id="10060792at2759"/>
<dbReference type="PhylomeDB" id="Q00649"/>
<dbReference type="PRO" id="PR:Q00649"/>
<dbReference type="Proteomes" id="UP000000539">
    <property type="component" value="Unassembled WGS sequence"/>
</dbReference>
<dbReference type="GO" id="GO:0043292">
    <property type="term" value="C:contractile muscle fiber"/>
    <property type="evidence" value="ECO:0000250"/>
    <property type="project" value="AgBase"/>
</dbReference>
<dbReference type="GO" id="GO:0005737">
    <property type="term" value="C:cytoplasm"/>
    <property type="evidence" value="ECO:0000314"/>
    <property type="project" value="AgBase"/>
</dbReference>
<dbReference type="GO" id="GO:0005622">
    <property type="term" value="C:intracellular anatomical structure"/>
    <property type="evidence" value="ECO:0000250"/>
    <property type="project" value="AgBase"/>
</dbReference>
<dbReference type="GO" id="GO:0005739">
    <property type="term" value="C:mitochondrion"/>
    <property type="evidence" value="ECO:0000303"/>
    <property type="project" value="AgBase"/>
</dbReference>
<dbReference type="GO" id="GO:0005634">
    <property type="term" value="C:nucleus"/>
    <property type="evidence" value="ECO:0000250"/>
    <property type="project" value="AgBase"/>
</dbReference>
<dbReference type="GO" id="GO:0005886">
    <property type="term" value="C:plasma membrane"/>
    <property type="evidence" value="ECO:0000250"/>
    <property type="project" value="AgBase"/>
</dbReference>
<dbReference type="GO" id="GO:0005819">
    <property type="term" value="C:spindle"/>
    <property type="evidence" value="ECO:0007669"/>
    <property type="project" value="UniProtKB-SubCell"/>
</dbReference>
<dbReference type="GO" id="GO:0030018">
    <property type="term" value="C:Z disc"/>
    <property type="evidence" value="ECO:0000250"/>
    <property type="project" value="AgBase"/>
</dbReference>
<dbReference type="GO" id="GO:0042802">
    <property type="term" value="F:identical protein binding"/>
    <property type="evidence" value="ECO:0000250"/>
    <property type="project" value="UniProtKB"/>
</dbReference>
<dbReference type="GO" id="GO:0044183">
    <property type="term" value="F:protein folding chaperone"/>
    <property type="evidence" value="ECO:0000250"/>
    <property type="project" value="UniProtKB"/>
</dbReference>
<dbReference type="GO" id="GO:0042803">
    <property type="term" value="F:protein homodimerization activity"/>
    <property type="evidence" value="ECO:0000250"/>
    <property type="project" value="UniProtKB"/>
</dbReference>
<dbReference type="GO" id="GO:0005080">
    <property type="term" value="F:protein kinase C binding"/>
    <property type="evidence" value="ECO:0000250"/>
    <property type="project" value="AgBase"/>
</dbReference>
<dbReference type="GO" id="GO:0008426">
    <property type="term" value="F:protein kinase C inhibitor activity"/>
    <property type="evidence" value="ECO:0000250"/>
    <property type="project" value="AgBase"/>
</dbReference>
<dbReference type="GO" id="GO:0051082">
    <property type="term" value="F:unfolded protein binding"/>
    <property type="evidence" value="ECO:0000318"/>
    <property type="project" value="GO_Central"/>
</dbReference>
<dbReference type="GO" id="GO:0051016">
    <property type="term" value="P:barbed-end actin filament capping"/>
    <property type="evidence" value="ECO:0000303"/>
    <property type="project" value="AgBase"/>
</dbReference>
<dbReference type="GO" id="GO:0061077">
    <property type="term" value="P:chaperone-mediated protein folding"/>
    <property type="evidence" value="ECO:0000250"/>
    <property type="project" value="UniProtKB"/>
</dbReference>
<dbReference type="GO" id="GO:0030837">
    <property type="term" value="P:negative regulation of actin filament polymerization"/>
    <property type="evidence" value="ECO:0000314"/>
    <property type="project" value="AgBase"/>
</dbReference>
<dbReference type="GO" id="GO:0043066">
    <property type="term" value="P:negative regulation of apoptotic process"/>
    <property type="evidence" value="ECO:0000318"/>
    <property type="project" value="GO_Central"/>
</dbReference>
<dbReference type="GO" id="GO:2001234">
    <property type="term" value="P:negative regulation of apoptotic signaling pathway"/>
    <property type="evidence" value="ECO:0000250"/>
    <property type="project" value="AgBase"/>
</dbReference>
<dbReference type="GO" id="GO:1902176">
    <property type="term" value="P:negative regulation of oxidative stress-induced intrinsic apoptotic signaling pathway"/>
    <property type="evidence" value="ECO:0000250"/>
    <property type="project" value="AgBase"/>
</dbReference>
<dbReference type="GO" id="GO:0006469">
    <property type="term" value="P:negative regulation of protein kinase activity"/>
    <property type="evidence" value="ECO:0000250"/>
    <property type="project" value="AgBase"/>
</dbReference>
<dbReference type="GO" id="GO:0071901">
    <property type="term" value="P:negative regulation of protein serine/threonine kinase activity"/>
    <property type="evidence" value="ECO:0000250"/>
    <property type="project" value="AgBase"/>
</dbReference>
<dbReference type="GO" id="GO:0032731">
    <property type="term" value="P:positive regulation of interleukin-1 beta production"/>
    <property type="evidence" value="ECO:0000250"/>
    <property type="project" value="AgBase"/>
</dbReference>
<dbReference type="GO" id="GO:0032760">
    <property type="term" value="P:positive regulation of tumor necrosis factor production"/>
    <property type="evidence" value="ECO:0000250"/>
    <property type="project" value="AgBase"/>
</dbReference>
<dbReference type="GO" id="GO:0042026">
    <property type="term" value="P:protein refolding"/>
    <property type="evidence" value="ECO:0000318"/>
    <property type="project" value="GO_Central"/>
</dbReference>
<dbReference type="GO" id="GO:0043122">
    <property type="term" value="P:regulation of canonical NF-kappaB signal transduction"/>
    <property type="evidence" value="ECO:0000250"/>
    <property type="project" value="AgBase"/>
</dbReference>
<dbReference type="GO" id="GO:0009408">
    <property type="term" value="P:response to heat"/>
    <property type="evidence" value="ECO:0000314"/>
    <property type="project" value="AgBase"/>
</dbReference>
<dbReference type="CDD" id="cd06475">
    <property type="entry name" value="ACD_HspB1_like"/>
    <property type="match status" value="1"/>
</dbReference>
<dbReference type="FunFam" id="2.60.40.790:FF:000024">
    <property type="entry name" value="heat shock protein beta-1"/>
    <property type="match status" value="1"/>
</dbReference>
<dbReference type="Gene3D" id="2.60.40.790">
    <property type="match status" value="1"/>
</dbReference>
<dbReference type="InterPro" id="IPR002068">
    <property type="entry name" value="A-crystallin/Hsp20_dom"/>
</dbReference>
<dbReference type="InterPro" id="IPR037876">
    <property type="entry name" value="ACD_HspB1"/>
</dbReference>
<dbReference type="InterPro" id="IPR001436">
    <property type="entry name" value="Alpha-crystallin/sHSP_animal"/>
</dbReference>
<dbReference type="InterPro" id="IPR008978">
    <property type="entry name" value="HSP20-like_chaperone"/>
</dbReference>
<dbReference type="PANTHER" id="PTHR45640:SF7">
    <property type="entry name" value="HEAT SHOCK PROTEIN BETA-1"/>
    <property type="match status" value="1"/>
</dbReference>
<dbReference type="PANTHER" id="PTHR45640">
    <property type="entry name" value="HEAT SHOCK PROTEIN HSP-12.2-RELATED"/>
    <property type="match status" value="1"/>
</dbReference>
<dbReference type="Pfam" id="PF00011">
    <property type="entry name" value="HSP20"/>
    <property type="match status" value="1"/>
</dbReference>
<dbReference type="PRINTS" id="PR00299">
    <property type="entry name" value="ACRYSTALLIN"/>
</dbReference>
<dbReference type="SUPFAM" id="SSF49764">
    <property type="entry name" value="HSP20-like chaperones"/>
    <property type="match status" value="1"/>
</dbReference>
<dbReference type="PROSITE" id="PS01031">
    <property type="entry name" value="SHSP"/>
    <property type="match status" value="1"/>
</dbReference>
<organism>
    <name type="scientific">Gallus gallus</name>
    <name type="common">Chicken</name>
    <dbReference type="NCBI Taxonomy" id="9031"/>
    <lineage>
        <taxon>Eukaryota</taxon>
        <taxon>Metazoa</taxon>
        <taxon>Chordata</taxon>
        <taxon>Craniata</taxon>
        <taxon>Vertebrata</taxon>
        <taxon>Euteleostomi</taxon>
        <taxon>Archelosauria</taxon>
        <taxon>Archosauria</taxon>
        <taxon>Dinosauria</taxon>
        <taxon>Saurischia</taxon>
        <taxon>Theropoda</taxon>
        <taxon>Coelurosauria</taxon>
        <taxon>Aves</taxon>
        <taxon>Neognathae</taxon>
        <taxon>Galloanserae</taxon>
        <taxon>Galliformes</taxon>
        <taxon>Phasianidae</taxon>
        <taxon>Phasianinae</taxon>
        <taxon>Gallus</taxon>
    </lineage>
</organism>
<comment type="function">
    <text evidence="4">Small heat shock protein which functions as a molecular chaperone probably maintaining denatured proteins in a folding-competent state. Plays a role in stress resistance and actin organization.</text>
</comment>
<comment type="subunit">
    <text evidence="2">Homooligomer. Homodimer; becomes monomeric upon activation. Heterooligomer.</text>
</comment>
<comment type="subcellular location">
    <subcellularLocation>
        <location evidence="2">Cytoplasm</location>
    </subcellularLocation>
    <subcellularLocation>
        <location evidence="2">Nucleus</location>
    </subcellularLocation>
    <subcellularLocation>
        <location evidence="2">Cytoplasm</location>
        <location evidence="2">Cytoskeleton</location>
        <location evidence="2">Spindle</location>
    </subcellularLocation>
</comment>
<comment type="tissue specificity">
    <text>Smooth, cardiac and skeletal muscle, hardly detectable in fibroblasts or focal contacts.</text>
</comment>
<comment type="similarity">
    <text evidence="3">Belongs to the small heat shock protein (HSP20) family.</text>
</comment>
<reference key="1">
    <citation type="journal article" date="1991" name="J. Cell Biol.">
        <title>A 25-kD inhibitor of actin polymerization is a low molecular mass heat shock protein.</title>
        <authorList>
            <person name="Miron T."/>
            <person name="Vancompernolle K."/>
            <person name="Vandekerckhove J."/>
            <person name="Wilchek M."/>
            <person name="Geiger B."/>
        </authorList>
    </citation>
    <scope>NUCLEOTIDE SEQUENCE [MRNA]</scope>
    <scope>FUNCTION</scope>
    <source>
        <tissue>Gizzard</tissue>
    </source>
</reference>
<accession>Q00649</accession>
<gene>
    <name type="primary">HSPB1</name>
</gene>
<feature type="chain" id="PRO_0000125931" description="Heat shock protein beta-1">
    <location>
        <begin position="1"/>
        <end position="193"/>
    </location>
</feature>
<feature type="domain" description="sHSP" evidence="3">
    <location>
        <begin position="74"/>
        <end position="182"/>
    </location>
</feature>
<feature type="modified residue" description="Phosphoserine" evidence="1">
    <location>
        <position position="15"/>
    </location>
</feature>
<feature type="modified residue" description="Phosphoserine" evidence="1">
    <location>
        <position position="80"/>
    </location>
</feature>
<name>HSPB1_CHICK</name>
<evidence type="ECO:0000250" key="1"/>
<evidence type="ECO:0000250" key="2">
    <source>
        <dbReference type="UniProtKB" id="P04792"/>
    </source>
</evidence>
<evidence type="ECO:0000255" key="3">
    <source>
        <dbReference type="PROSITE-ProRule" id="PRU00285"/>
    </source>
</evidence>
<evidence type="ECO:0000269" key="4">
    <source>
    </source>
</evidence>